<proteinExistence type="inferred from homology"/>
<protein>
    <recommendedName>
        <fullName evidence="1">Holliday junction branch migration complex subunit RuvA</fullName>
    </recommendedName>
</protein>
<comment type="function">
    <text evidence="1">The RuvA-RuvB-RuvC complex processes Holliday junction (HJ) DNA during genetic recombination and DNA repair, while the RuvA-RuvB complex plays an important role in the rescue of blocked DNA replication forks via replication fork reversal (RFR). RuvA specifically binds to HJ cruciform DNA, conferring on it an open structure. The RuvB hexamer acts as an ATP-dependent pump, pulling dsDNA into and through the RuvAB complex. HJ branch migration allows RuvC to scan DNA until it finds its consensus sequence, where it cleaves and resolves the cruciform DNA.</text>
</comment>
<comment type="subunit">
    <text evidence="1">Homotetramer. Forms an RuvA(8)-RuvB(12)-Holliday junction (HJ) complex. HJ DNA is sandwiched between 2 RuvA tetramers; dsDNA enters through RuvA and exits via RuvB. An RuvB hexamer assembles on each DNA strand where it exits the tetramer. Each RuvB hexamer is contacted by two RuvA subunits (via domain III) on 2 adjacent RuvB subunits; this complex drives branch migration. In the full resolvosome a probable DNA-RuvA(4)-RuvB(12)-RuvC(2) complex forms which resolves the HJ.</text>
</comment>
<comment type="subcellular location">
    <subcellularLocation>
        <location evidence="1">Cytoplasm</location>
    </subcellularLocation>
</comment>
<comment type="domain">
    <text evidence="1">Has three domains with a flexible linker between the domains II and III and assumes an 'L' shape. Domain III is highly mobile and contacts RuvB.</text>
</comment>
<comment type="similarity">
    <text evidence="1">Belongs to the RuvA family.</text>
</comment>
<reference key="1">
    <citation type="journal article" date="2007" name="BMC Microbiol.">
        <title>Subtle genetic changes enhance virulence of methicillin resistant and sensitive Staphylococcus aureus.</title>
        <authorList>
            <person name="Highlander S.K."/>
            <person name="Hulten K.G."/>
            <person name="Qin X."/>
            <person name="Jiang H."/>
            <person name="Yerrapragada S."/>
            <person name="Mason E.O. Jr."/>
            <person name="Shang Y."/>
            <person name="Williams T.M."/>
            <person name="Fortunov R.M."/>
            <person name="Liu Y."/>
            <person name="Igboeli O."/>
            <person name="Petrosino J."/>
            <person name="Tirumalai M."/>
            <person name="Uzman A."/>
            <person name="Fox G.E."/>
            <person name="Cardenas A.M."/>
            <person name="Muzny D.M."/>
            <person name="Hemphill L."/>
            <person name="Ding Y."/>
            <person name="Dugan S."/>
            <person name="Blyth P.R."/>
            <person name="Buhay C.J."/>
            <person name="Dinh H.H."/>
            <person name="Hawes A.C."/>
            <person name="Holder M."/>
            <person name="Kovar C.L."/>
            <person name="Lee S.L."/>
            <person name="Liu W."/>
            <person name="Nazareth L.V."/>
            <person name="Wang Q."/>
            <person name="Zhou J."/>
            <person name="Kaplan S.L."/>
            <person name="Weinstock G.M."/>
        </authorList>
    </citation>
    <scope>NUCLEOTIDE SEQUENCE [LARGE SCALE GENOMIC DNA]</scope>
    <source>
        <strain>USA300 / TCH1516</strain>
    </source>
</reference>
<dbReference type="EMBL" id="CP000730">
    <property type="protein sequence ID" value="ABX29648.1"/>
    <property type="molecule type" value="Genomic_DNA"/>
</dbReference>
<dbReference type="RefSeq" id="WP_000271547.1">
    <property type="nucleotide sequence ID" value="NC_010079.1"/>
</dbReference>
<dbReference type="SMR" id="A8Z2H0"/>
<dbReference type="KEGG" id="sax:USA300HOU_1641"/>
<dbReference type="HOGENOM" id="CLU_087936_1_0_9"/>
<dbReference type="GO" id="GO:0005737">
    <property type="term" value="C:cytoplasm"/>
    <property type="evidence" value="ECO:0007669"/>
    <property type="project" value="UniProtKB-SubCell"/>
</dbReference>
<dbReference type="GO" id="GO:0009379">
    <property type="term" value="C:Holliday junction helicase complex"/>
    <property type="evidence" value="ECO:0007669"/>
    <property type="project" value="InterPro"/>
</dbReference>
<dbReference type="GO" id="GO:0048476">
    <property type="term" value="C:Holliday junction resolvase complex"/>
    <property type="evidence" value="ECO:0007669"/>
    <property type="project" value="UniProtKB-UniRule"/>
</dbReference>
<dbReference type="GO" id="GO:0005524">
    <property type="term" value="F:ATP binding"/>
    <property type="evidence" value="ECO:0007669"/>
    <property type="project" value="InterPro"/>
</dbReference>
<dbReference type="GO" id="GO:0000400">
    <property type="term" value="F:four-way junction DNA binding"/>
    <property type="evidence" value="ECO:0007669"/>
    <property type="project" value="UniProtKB-UniRule"/>
</dbReference>
<dbReference type="GO" id="GO:0009378">
    <property type="term" value="F:four-way junction helicase activity"/>
    <property type="evidence" value="ECO:0007669"/>
    <property type="project" value="InterPro"/>
</dbReference>
<dbReference type="GO" id="GO:0006310">
    <property type="term" value="P:DNA recombination"/>
    <property type="evidence" value="ECO:0007669"/>
    <property type="project" value="UniProtKB-UniRule"/>
</dbReference>
<dbReference type="GO" id="GO:0006281">
    <property type="term" value="P:DNA repair"/>
    <property type="evidence" value="ECO:0007669"/>
    <property type="project" value="UniProtKB-UniRule"/>
</dbReference>
<dbReference type="CDD" id="cd14332">
    <property type="entry name" value="UBA_RuvA_C"/>
    <property type="match status" value="1"/>
</dbReference>
<dbReference type="Gene3D" id="1.10.150.20">
    <property type="entry name" value="5' to 3' exonuclease, C-terminal subdomain"/>
    <property type="match status" value="1"/>
</dbReference>
<dbReference type="Gene3D" id="1.10.8.10">
    <property type="entry name" value="DNA helicase RuvA subunit, C-terminal domain"/>
    <property type="match status" value="1"/>
</dbReference>
<dbReference type="Gene3D" id="2.40.50.140">
    <property type="entry name" value="Nucleic acid-binding proteins"/>
    <property type="match status" value="1"/>
</dbReference>
<dbReference type="HAMAP" id="MF_00031">
    <property type="entry name" value="DNA_HJ_migration_RuvA"/>
    <property type="match status" value="1"/>
</dbReference>
<dbReference type="InterPro" id="IPR013849">
    <property type="entry name" value="DNA_helicase_Holl-junc_RuvA_I"/>
</dbReference>
<dbReference type="InterPro" id="IPR003583">
    <property type="entry name" value="Hlx-hairpin-Hlx_DNA-bd_motif"/>
</dbReference>
<dbReference type="InterPro" id="IPR012340">
    <property type="entry name" value="NA-bd_OB-fold"/>
</dbReference>
<dbReference type="InterPro" id="IPR000085">
    <property type="entry name" value="RuvA"/>
</dbReference>
<dbReference type="InterPro" id="IPR010994">
    <property type="entry name" value="RuvA_2-like"/>
</dbReference>
<dbReference type="InterPro" id="IPR011114">
    <property type="entry name" value="RuvA_C"/>
</dbReference>
<dbReference type="InterPro" id="IPR036267">
    <property type="entry name" value="RuvA_C_sf"/>
</dbReference>
<dbReference type="NCBIfam" id="TIGR00084">
    <property type="entry name" value="ruvA"/>
    <property type="match status" value="1"/>
</dbReference>
<dbReference type="Pfam" id="PF14520">
    <property type="entry name" value="HHH_5"/>
    <property type="match status" value="1"/>
</dbReference>
<dbReference type="Pfam" id="PF07499">
    <property type="entry name" value="RuvA_C"/>
    <property type="match status" value="1"/>
</dbReference>
<dbReference type="Pfam" id="PF01330">
    <property type="entry name" value="RuvA_N"/>
    <property type="match status" value="1"/>
</dbReference>
<dbReference type="SMART" id="SM00278">
    <property type="entry name" value="HhH1"/>
    <property type="match status" value="2"/>
</dbReference>
<dbReference type="SUPFAM" id="SSF46929">
    <property type="entry name" value="DNA helicase RuvA subunit, C-terminal domain"/>
    <property type="match status" value="1"/>
</dbReference>
<dbReference type="SUPFAM" id="SSF50249">
    <property type="entry name" value="Nucleic acid-binding proteins"/>
    <property type="match status" value="1"/>
</dbReference>
<dbReference type="SUPFAM" id="SSF47781">
    <property type="entry name" value="RuvA domain 2-like"/>
    <property type="match status" value="1"/>
</dbReference>
<gene>
    <name evidence="1" type="primary">ruvA</name>
    <name type="ordered locus">USA300HOU_1641</name>
</gene>
<sequence>MYAYVKGKLTHLYPTHVVVETAGVGYEIQTPNSYRFQKHLDHEVLIHTSLIVREDAQLLYGFSSEEEKDMFLSLIKVTGIGPKSALAILATSTPNEVKRAIENENDTYLTKFPGIGKKTARQIVLDLKGKVKITEEDSDSLLQVDATSTVQDQFVQEAMLALEALGYSKRELAKVEKTLNKNKYDSVDEAVKAGLQLVVS</sequence>
<accession>A8Z2H0</accession>
<evidence type="ECO:0000255" key="1">
    <source>
        <dbReference type="HAMAP-Rule" id="MF_00031"/>
    </source>
</evidence>
<feature type="chain" id="PRO_1000074443" description="Holliday junction branch migration complex subunit RuvA">
    <location>
        <begin position="1"/>
        <end position="200"/>
    </location>
</feature>
<feature type="region of interest" description="Domain I" evidence="1">
    <location>
        <begin position="1"/>
        <end position="63"/>
    </location>
</feature>
<feature type="region of interest" description="Domain II" evidence="1">
    <location>
        <begin position="64"/>
        <end position="142"/>
    </location>
</feature>
<feature type="region of interest" description="Flexible linker" evidence="1">
    <location>
        <begin position="143"/>
        <end position="149"/>
    </location>
</feature>
<feature type="region of interest" description="Domain III" evidence="1">
    <location>
        <begin position="150"/>
        <end position="200"/>
    </location>
</feature>
<name>RUVA_STAAT</name>
<organism>
    <name type="scientific">Staphylococcus aureus (strain USA300 / TCH1516)</name>
    <dbReference type="NCBI Taxonomy" id="451516"/>
    <lineage>
        <taxon>Bacteria</taxon>
        <taxon>Bacillati</taxon>
        <taxon>Bacillota</taxon>
        <taxon>Bacilli</taxon>
        <taxon>Bacillales</taxon>
        <taxon>Staphylococcaceae</taxon>
        <taxon>Staphylococcus</taxon>
    </lineage>
</organism>
<keyword id="KW-0963">Cytoplasm</keyword>
<keyword id="KW-0227">DNA damage</keyword>
<keyword id="KW-0233">DNA recombination</keyword>
<keyword id="KW-0234">DNA repair</keyword>
<keyword id="KW-0238">DNA-binding</keyword>